<sequence length="121" mass="13941">MLPLTLLNATQGRPILVELKNGETFNGHLENCDNYMNLTLREVIRTMPDGDKFFRLPECYIRGNNIKYLRIQDEVLSQVAKQQAQQRENRGSRFRGRGQRGRGNYGHTAPNRRGRGRGGHM</sequence>
<comment type="function">
    <text evidence="1 4 5">Component of LSm protein complexes, which are involved in RNA processing and may function in a chaperone-like manner (PubMed:22615807, PubMed:32518066). Component of the cytoplasmic LSM1-LSM7 complex which is involved in mRNA degradation by activating the decapping step (PubMed:32518066). The LSM1-LSM7 complex loads onto the 3'-end of single stranded RNA (PubMed:32518066). Component of the nuclear LSM2-LSM8 complex, which is involved in spliceosome assembly (PubMed:32518066). The LSM2-LSM8 complex plays a role in the biogenesis of the spliceosomal U4/U6-U5 tri-snRNP complex by accelerating prp24-mediated annealing of U4/U6 di-snRNA (By similarity). The LSM2-LSM8 complex binds U6 snRNA terminating with a cyclic 2',3' phosphate group; RNA with an unmodified 3' hydroxyl or non-cyclic 3' phosphate is bound less tightly (PubMed:32518066).</text>
</comment>
<comment type="subunit">
    <text evidence="4 5 7">Component of the heptameric LSM1-LSM7 complex that forms a seven-membered ring structure with a donut shape (Probable) (PubMed:32518066). The LSm subunits are arranged in the order lsm1, lsm2, lsm3, lsm6, lsm5, lsm7 and lsm4 (PubMed:22615807, PubMed:32518066). Component of the heptameric LSM2-LSM8 complex that forms a seven-membered ring structure with a donut shape (Probable) (PubMed:32518066). The LSm subunits are arranged in the order lsm8, lsm2, lsm3, lsm6, lsm5, lsm7 and lsm4 (PubMed:22615807, PubMed:32518066).</text>
</comment>
<comment type="subcellular location">
    <subcellularLocation>
        <location evidence="1">Nucleus</location>
    </subcellularLocation>
    <subcellularLocation>
        <location evidence="1">Cytoplasm</location>
    </subcellularLocation>
</comment>
<comment type="similarity">
    <text evidence="6">Belongs to the snRNP Sm proteins family.</text>
</comment>
<feature type="chain" id="PRO_0000125570" description="LSM complex subunit lsm4">
    <location>
        <begin position="1"/>
        <end position="121"/>
    </location>
</feature>
<feature type="domain" description="Sm" evidence="2">
    <location>
        <begin position="2"/>
        <end position="75"/>
    </location>
</feature>
<feature type="region of interest" description="Disordered" evidence="3">
    <location>
        <begin position="82"/>
        <end position="121"/>
    </location>
</feature>
<feature type="compositionally biased region" description="Basic residues" evidence="3">
    <location>
        <begin position="110"/>
        <end position="121"/>
    </location>
</feature>
<feature type="helix" evidence="13">
    <location>
        <begin position="3"/>
        <end position="9"/>
    </location>
</feature>
<feature type="turn" evidence="13">
    <location>
        <begin position="10"/>
        <end position="12"/>
    </location>
</feature>
<feature type="strand" evidence="13">
    <location>
        <begin position="13"/>
        <end position="19"/>
    </location>
</feature>
<feature type="strand" evidence="13">
    <location>
        <begin position="24"/>
        <end position="32"/>
    </location>
</feature>
<feature type="strand" evidence="13">
    <location>
        <begin position="38"/>
        <end position="46"/>
    </location>
</feature>
<feature type="strand" evidence="13">
    <location>
        <begin position="53"/>
        <end position="61"/>
    </location>
</feature>
<feature type="helix" evidence="13">
    <location>
        <begin position="63"/>
        <end position="65"/>
    </location>
</feature>
<feature type="strand" evidence="13">
    <location>
        <begin position="66"/>
        <end position="71"/>
    </location>
</feature>
<feature type="helix" evidence="13">
    <location>
        <begin position="73"/>
        <end position="81"/>
    </location>
</feature>
<organism>
    <name type="scientific">Schizosaccharomyces pombe (strain 972 / ATCC 24843)</name>
    <name type="common">Fission yeast</name>
    <dbReference type="NCBI Taxonomy" id="284812"/>
    <lineage>
        <taxon>Eukaryota</taxon>
        <taxon>Fungi</taxon>
        <taxon>Dikarya</taxon>
        <taxon>Ascomycota</taxon>
        <taxon>Taphrinomycotina</taxon>
        <taxon>Schizosaccharomycetes</taxon>
        <taxon>Schizosaccharomycetales</taxon>
        <taxon>Schizosaccharomycetaceae</taxon>
        <taxon>Schizosaccharomyces</taxon>
    </lineage>
</organism>
<reference key="1">
    <citation type="journal article" date="2002" name="Nature">
        <title>The genome sequence of Schizosaccharomyces pombe.</title>
        <authorList>
            <person name="Wood V."/>
            <person name="Gwilliam R."/>
            <person name="Rajandream M.A."/>
            <person name="Lyne M.H."/>
            <person name="Lyne R."/>
            <person name="Stewart A."/>
            <person name="Sgouros J.G."/>
            <person name="Peat N."/>
            <person name="Hayles J."/>
            <person name="Baker S.G."/>
            <person name="Basham D."/>
            <person name="Bowman S."/>
            <person name="Brooks K."/>
            <person name="Brown D."/>
            <person name="Brown S."/>
            <person name="Chillingworth T."/>
            <person name="Churcher C.M."/>
            <person name="Collins M."/>
            <person name="Connor R."/>
            <person name="Cronin A."/>
            <person name="Davis P."/>
            <person name="Feltwell T."/>
            <person name="Fraser A."/>
            <person name="Gentles S."/>
            <person name="Goble A."/>
            <person name="Hamlin N."/>
            <person name="Harris D.E."/>
            <person name="Hidalgo J."/>
            <person name="Hodgson G."/>
            <person name="Holroyd S."/>
            <person name="Hornsby T."/>
            <person name="Howarth S."/>
            <person name="Huckle E.J."/>
            <person name="Hunt S."/>
            <person name="Jagels K."/>
            <person name="James K.D."/>
            <person name="Jones L."/>
            <person name="Jones M."/>
            <person name="Leather S."/>
            <person name="McDonald S."/>
            <person name="McLean J."/>
            <person name="Mooney P."/>
            <person name="Moule S."/>
            <person name="Mungall K.L."/>
            <person name="Murphy L.D."/>
            <person name="Niblett D."/>
            <person name="Odell C."/>
            <person name="Oliver K."/>
            <person name="O'Neil S."/>
            <person name="Pearson D."/>
            <person name="Quail M.A."/>
            <person name="Rabbinowitsch E."/>
            <person name="Rutherford K.M."/>
            <person name="Rutter S."/>
            <person name="Saunders D."/>
            <person name="Seeger K."/>
            <person name="Sharp S."/>
            <person name="Skelton J."/>
            <person name="Simmonds M.N."/>
            <person name="Squares R."/>
            <person name="Squares S."/>
            <person name="Stevens K."/>
            <person name="Taylor K."/>
            <person name="Taylor R.G."/>
            <person name="Tivey A."/>
            <person name="Walsh S.V."/>
            <person name="Warren T."/>
            <person name="Whitehead S."/>
            <person name="Woodward J.R."/>
            <person name="Volckaert G."/>
            <person name="Aert R."/>
            <person name="Robben J."/>
            <person name="Grymonprez B."/>
            <person name="Weltjens I."/>
            <person name="Vanstreels E."/>
            <person name="Rieger M."/>
            <person name="Schaefer M."/>
            <person name="Mueller-Auer S."/>
            <person name="Gabel C."/>
            <person name="Fuchs M."/>
            <person name="Duesterhoeft A."/>
            <person name="Fritzc C."/>
            <person name="Holzer E."/>
            <person name="Moestl D."/>
            <person name="Hilbert H."/>
            <person name="Borzym K."/>
            <person name="Langer I."/>
            <person name="Beck A."/>
            <person name="Lehrach H."/>
            <person name="Reinhardt R."/>
            <person name="Pohl T.M."/>
            <person name="Eger P."/>
            <person name="Zimmermann W."/>
            <person name="Wedler H."/>
            <person name="Wambutt R."/>
            <person name="Purnelle B."/>
            <person name="Goffeau A."/>
            <person name="Cadieu E."/>
            <person name="Dreano S."/>
            <person name="Gloux S."/>
            <person name="Lelaure V."/>
            <person name="Mottier S."/>
            <person name="Galibert F."/>
            <person name="Aves S.J."/>
            <person name="Xiang Z."/>
            <person name="Hunt C."/>
            <person name="Moore K."/>
            <person name="Hurst S.M."/>
            <person name="Lucas M."/>
            <person name="Rochet M."/>
            <person name="Gaillardin C."/>
            <person name="Tallada V.A."/>
            <person name="Garzon A."/>
            <person name="Thode G."/>
            <person name="Daga R.R."/>
            <person name="Cruzado L."/>
            <person name="Jimenez J."/>
            <person name="Sanchez M."/>
            <person name="del Rey F."/>
            <person name="Benito J."/>
            <person name="Dominguez A."/>
            <person name="Revuelta J.L."/>
            <person name="Moreno S."/>
            <person name="Armstrong J."/>
            <person name="Forsburg S.L."/>
            <person name="Cerutti L."/>
            <person name="Lowe T."/>
            <person name="McCombie W.R."/>
            <person name="Paulsen I."/>
            <person name="Potashkin J."/>
            <person name="Shpakovski G.V."/>
            <person name="Ussery D."/>
            <person name="Barrell B.G."/>
            <person name="Nurse P."/>
        </authorList>
    </citation>
    <scope>NUCLEOTIDE SEQUENCE [LARGE SCALE GENOMIC DNA]</scope>
    <source>
        <strain>972 / ATCC 24843</strain>
    </source>
</reference>
<reference evidence="8" key="2">
    <citation type="journal article" date="2012" name="PLoS ONE">
        <title>Crystal structures of Lsm3, Lsm4 and Lsm5/6/7 from Schizosaccharomyces pombe.</title>
        <authorList>
            <person name="Wu D."/>
            <person name="Jiang S."/>
            <person name="Bowler M.W."/>
            <person name="Song H."/>
        </authorList>
    </citation>
    <scope>X-RAY CRYSTALLOGRAPHY (2.20 ANGSTROMS) OF 1-91</scope>
    <scope>FUNCTION</scope>
    <scope>SUBUNIT</scope>
    <scope>IDENTIFICATION IN THE LSM1-LSM7 AND LSM2-LSM8 COMPLEXES</scope>
</reference>
<reference evidence="9 10 11 12" key="3">
    <citation type="journal article" date="2020" name="RNA">
        <title>Molecular basis for the distinct cellular functions of the Lsm1-7 and Lsm2-8 complexes.</title>
        <authorList>
            <person name="Montemayor E.J."/>
            <person name="Virta J.M."/>
            <person name="Hayes S.M."/>
            <person name="Nomura Y."/>
            <person name="Brow D.A."/>
            <person name="Butcher S.E."/>
        </authorList>
    </citation>
    <scope>X-RAY CRYSTALLOGRAPHY (1.81 ANGSTROMS) IN COMPLEX WITH RNA</scope>
    <scope>FUNCTION</scope>
    <scope>SUBUNIT</scope>
    <scope>IDENTIFICATION IN THE LSM1-LSM7 AND LSM2-LSM8 COMPLEXES</scope>
</reference>
<protein>
    <recommendedName>
        <fullName evidence="6">LSM complex subunit lsm4</fullName>
    </recommendedName>
</protein>
<proteinExistence type="evidence at protein level"/>
<gene>
    <name type="primary">lsm4</name>
    <name type="ORF">SPBC30D10.06</name>
</gene>
<accession>O14352</accession>
<keyword id="KW-0002">3D-structure</keyword>
<keyword id="KW-0963">Cytoplasm</keyword>
<keyword id="KW-0507">mRNA processing</keyword>
<keyword id="KW-0508">mRNA splicing</keyword>
<keyword id="KW-0539">Nucleus</keyword>
<keyword id="KW-1185">Reference proteome</keyword>
<keyword id="KW-0687">Ribonucleoprotein</keyword>
<keyword id="KW-0694">RNA-binding</keyword>
<keyword id="KW-0747">Spliceosome</keyword>
<dbReference type="EMBL" id="CU329671">
    <property type="protein sequence ID" value="CAB10801.1"/>
    <property type="molecule type" value="Genomic_DNA"/>
</dbReference>
<dbReference type="PIR" id="T40190">
    <property type="entry name" value="T40190"/>
</dbReference>
<dbReference type="RefSeq" id="NP_596279.1">
    <property type="nucleotide sequence ID" value="NM_001022200.2"/>
</dbReference>
<dbReference type="PDB" id="4EMH">
    <property type="method" value="X-ray"/>
    <property type="resolution" value="2.20 A"/>
    <property type="chains" value="A/B/C/D/E/F/G/H/I/J/K/L/M/N/O/P/Q/R/T/U/V/W/X/Y=1-91"/>
</dbReference>
<dbReference type="PDB" id="6PPN">
    <property type="method" value="X-ray"/>
    <property type="resolution" value="1.91 A"/>
    <property type="chains" value="D/L=1-121"/>
</dbReference>
<dbReference type="PDB" id="6PPP">
    <property type="method" value="X-ray"/>
    <property type="resolution" value="2.33 A"/>
    <property type="chains" value="D/L=1-121"/>
</dbReference>
<dbReference type="PDB" id="6PPQ">
    <property type="method" value="X-ray"/>
    <property type="resolution" value="1.81 A"/>
    <property type="chains" value="D=1-121"/>
</dbReference>
<dbReference type="PDB" id="6PPV">
    <property type="method" value="X-ray"/>
    <property type="resolution" value="2.05 A"/>
    <property type="chains" value="D=1-121"/>
</dbReference>
<dbReference type="PDBsum" id="4EMH"/>
<dbReference type="PDBsum" id="6PPN"/>
<dbReference type="PDBsum" id="6PPP"/>
<dbReference type="PDBsum" id="6PPQ"/>
<dbReference type="PDBsum" id="6PPV"/>
<dbReference type="SMR" id="O14352"/>
<dbReference type="BioGRID" id="277003">
    <property type="interactions" value="9"/>
</dbReference>
<dbReference type="FunCoup" id="O14352">
    <property type="interactions" value="283"/>
</dbReference>
<dbReference type="STRING" id="284812.O14352"/>
<dbReference type="iPTMnet" id="O14352"/>
<dbReference type="PaxDb" id="4896-SPBC30D10.06.1"/>
<dbReference type="EnsemblFungi" id="SPBC30D10.06.1">
    <property type="protein sequence ID" value="SPBC30D10.06.1:pep"/>
    <property type="gene ID" value="SPBC30D10.06"/>
</dbReference>
<dbReference type="PomBase" id="SPBC30D10.06">
    <property type="gene designation" value="lsm4"/>
</dbReference>
<dbReference type="VEuPathDB" id="FungiDB:SPBC30D10.06"/>
<dbReference type="eggNOG" id="KOG3293">
    <property type="taxonomic scope" value="Eukaryota"/>
</dbReference>
<dbReference type="HOGENOM" id="CLU_099537_2_2_1"/>
<dbReference type="InParanoid" id="O14352"/>
<dbReference type="OMA" id="RGAFGNR"/>
<dbReference type="PhylomeDB" id="O14352"/>
<dbReference type="Reactome" id="R-SPO-430039">
    <property type="pathway name" value="mRNA decay by 5' to 3' exoribonuclease"/>
</dbReference>
<dbReference type="PRO" id="PR:O14352"/>
<dbReference type="Proteomes" id="UP000002485">
    <property type="component" value="Chromosome II"/>
</dbReference>
<dbReference type="GO" id="GO:0005829">
    <property type="term" value="C:cytosol"/>
    <property type="evidence" value="ECO:0007005"/>
    <property type="project" value="PomBase"/>
</dbReference>
<dbReference type="GO" id="GO:1990726">
    <property type="term" value="C:Lsm1-7-Pat1 complex"/>
    <property type="evidence" value="ECO:0000269"/>
    <property type="project" value="PomBase"/>
</dbReference>
<dbReference type="GO" id="GO:0120115">
    <property type="term" value="C:Lsm2-8 complex"/>
    <property type="evidence" value="ECO:0000269"/>
    <property type="project" value="PomBase"/>
</dbReference>
<dbReference type="GO" id="GO:0005730">
    <property type="term" value="C:nucleolus"/>
    <property type="evidence" value="ECO:0000266"/>
    <property type="project" value="PomBase"/>
</dbReference>
<dbReference type="GO" id="GO:0005634">
    <property type="term" value="C:nucleus"/>
    <property type="evidence" value="ECO:0007005"/>
    <property type="project" value="PomBase"/>
</dbReference>
<dbReference type="GO" id="GO:0000932">
    <property type="term" value="C:P-body"/>
    <property type="evidence" value="ECO:0000318"/>
    <property type="project" value="GO_Central"/>
</dbReference>
<dbReference type="GO" id="GO:0005681">
    <property type="term" value="C:spliceosomal complex"/>
    <property type="evidence" value="ECO:0007669"/>
    <property type="project" value="UniProtKB-KW"/>
</dbReference>
<dbReference type="GO" id="GO:0097526">
    <property type="term" value="C:spliceosomal tri-snRNP complex"/>
    <property type="evidence" value="ECO:0000318"/>
    <property type="project" value="GO_Central"/>
</dbReference>
<dbReference type="GO" id="GO:0005697">
    <property type="term" value="C:telomerase holoenzyme complex"/>
    <property type="evidence" value="ECO:0000304"/>
    <property type="project" value="PomBase"/>
</dbReference>
<dbReference type="GO" id="GO:0005686">
    <property type="term" value="C:U2 snRNP"/>
    <property type="evidence" value="ECO:0000269"/>
    <property type="project" value="PomBase"/>
</dbReference>
<dbReference type="GO" id="GO:0046540">
    <property type="term" value="C:U4/U6 x U5 tri-snRNP complex"/>
    <property type="evidence" value="ECO:0000266"/>
    <property type="project" value="PomBase"/>
</dbReference>
<dbReference type="GO" id="GO:0005682">
    <property type="term" value="C:U5 snRNP"/>
    <property type="evidence" value="ECO:0000314"/>
    <property type="project" value="PomBase"/>
</dbReference>
<dbReference type="GO" id="GO:0005688">
    <property type="term" value="C:U6 snRNP"/>
    <property type="evidence" value="ECO:0000269"/>
    <property type="project" value="PomBase"/>
</dbReference>
<dbReference type="GO" id="GO:0030620">
    <property type="term" value="F:U2 snRNA binding"/>
    <property type="evidence" value="ECO:0000314"/>
    <property type="project" value="PomBase"/>
</dbReference>
<dbReference type="GO" id="GO:0017070">
    <property type="term" value="F:U6 snRNA binding"/>
    <property type="evidence" value="ECO:0000318"/>
    <property type="project" value="GO_Central"/>
</dbReference>
<dbReference type="GO" id="GO:0000956">
    <property type="term" value="P:nuclear-transcribed mRNA catabolic process"/>
    <property type="evidence" value="ECO:0007669"/>
    <property type="project" value="InterPro"/>
</dbReference>
<dbReference type="GO" id="GO:0033962">
    <property type="term" value="P:P-body assembly"/>
    <property type="evidence" value="ECO:0000318"/>
    <property type="project" value="GO_Central"/>
</dbReference>
<dbReference type="GO" id="GO:0034337">
    <property type="term" value="P:RNA folding"/>
    <property type="evidence" value="ECO:0007669"/>
    <property type="project" value="GOC"/>
</dbReference>
<dbReference type="GO" id="GO:0000387">
    <property type="term" value="P:spliceosomal snRNP assembly"/>
    <property type="evidence" value="ECO:0000318"/>
    <property type="project" value="GO_Central"/>
</dbReference>
<dbReference type="GO" id="GO:1905323">
    <property type="term" value="P:telomerase holoenzyme complex assembly"/>
    <property type="evidence" value="ECO:0000304"/>
    <property type="project" value="PomBase"/>
</dbReference>
<dbReference type="CDD" id="cd01723">
    <property type="entry name" value="LSm4"/>
    <property type="match status" value="1"/>
</dbReference>
<dbReference type="DisProt" id="DP02068"/>
<dbReference type="FunFam" id="2.30.30.100:FF:000024">
    <property type="entry name" value="U6 snRNA-associated Sm-like protein LSm4"/>
    <property type="match status" value="1"/>
</dbReference>
<dbReference type="Gene3D" id="2.30.30.100">
    <property type="match status" value="1"/>
</dbReference>
<dbReference type="InterPro" id="IPR034101">
    <property type="entry name" value="Lsm4"/>
</dbReference>
<dbReference type="InterPro" id="IPR027141">
    <property type="entry name" value="LSm4/Sm_D1/D3"/>
</dbReference>
<dbReference type="InterPro" id="IPR010920">
    <property type="entry name" value="LSM_dom_sf"/>
</dbReference>
<dbReference type="InterPro" id="IPR047575">
    <property type="entry name" value="Sm"/>
</dbReference>
<dbReference type="InterPro" id="IPR001163">
    <property type="entry name" value="Sm_dom_euk/arc"/>
</dbReference>
<dbReference type="PANTHER" id="PTHR23338">
    <property type="entry name" value="SMALL NUCLEAR RIBONUCLEOPROTEIN SM"/>
    <property type="match status" value="1"/>
</dbReference>
<dbReference type="Pfam" id="PF01423">
    <property type="entry name" value="LSM"/>
    <property type="match status" value="1"/>
</dbReference>
<dbReference type="SMART" id="SM00651">
    <property type="entry name" value="Sm"/>
    <property type="match status" value="1"/>
</dbReference>
<dbReference type="SUPFAM" id="SSF50182">
    <property type="entry name" value="Sm-like ribonucleoproteins"/>
    <property type="match status" value="1"/>
</dbReference>
<dbReference type="PROSITE" id="PS52002">
    <property type="entry name" value="SM"/>
    <property type="match status" value="1"/>
</dbReference>
<name>LSM4_SCHPO</name>
<evidence type="ECO:0000250" key="1">
    <source>
        <dbReference type="UniProtKB" id="P40070"/>
    </source>
</evidence>
<evidence type="ECO:0000255" key="2">
    <source>
        <dbReference type="PROSITE-ProRule" id="PRU01346"/>
    </source>
</evidence>
<evidence type="ECO:0000256" key="3">
    <source>
        <dbReference type="SAM" id="MobiDB-lite"/>
    </source>
</evidence>
<evidence type="ECO:0000269" key="4">
    <source>
    </source>
</evidence>
<evidence type="ECO:0000269" key="5">
    <source>
    </source>
</evidence>
<evidence type="ECO:0000305" key="6"/>
<evidence type="ECO:0000305" key="7">
    <source>
    </source>
</evidence>
<evidence type="ECO:0007744" key="8">
    <source>
        <dbReference type="PDB" id="4EMH"/>
    </source>
</evidence>
<evidence type="ECO:0007744" key="9">
    <source>
        <dbReference type="PDB" id="6PPN"/>
    </source>
</evidence>
<evidence type="ECO:0007744" key="10">
    <source>
        <dbReference type="PDB" id="6PPP"/>
    </source>
</evidence>
<evidence type="ECO:0007744" key="11">
    <source>
        <dbReference type="PDB" id="6PPQ"/>
    </source>
</evidence>
<evidence type="ECO:0007744" key="12">
    <source>
        <dbReference type="PDB" id="6PPV"/>
    </source>
</evidence>
<evidence type="ECO:0007829" key="13">
    <source>
        <dbReference type="PDB" id="6PPQ"/>
    </source>
</evidence>